<comment type="function">
    <text evidence="1">Is able to transfer iron-sulfur clusters to apo-ferredoxin. Multiple cycles of [2Fe2S] cluster formation and transfer are observed, suggesting that IscA acts catalytically. Recruits intracellular free iron so as to provide iron for the assembly of transient iron-sulfur cluster in IscU in the presence of IscS, L-cysteine and the thioredoxin reductase system TrxA/TrxB (By similarity).</text>
</comment>
<comment type="cofactor">
    <cofactor evidence="1">
        <name>Fe cation</name>
        <dbReference type="ChEBI" id="CHEBI:24875"/>
    </cofactor>
    <text evidence="1">Binds 2 iron ions per dimer. The dimer may bind additional iron ions.</text>
</comment>
<comment type="subunit">
    <text evidence="1">Homodimer; may form tetramers and higher multimers.</text>
</comment>
<comment type="similarity">
    <text evidence="2">Belongs to the HesB/IscA family.</text>
</comment>
<reference key="1">
    <citation type="journal article" date="2001" name="Nature">
        <title>Genome sequence of enterohaemorrhagic Escherichia coli O157:H7.</title>
        <authorList>
            <person name="Perna N.T."/>
            <person name="Plunkett G. III"/>
            <person name="Burland V."/>
            <person name="Mau B."/>
            <person name="Glasner J.D."/>
            <person name="Rose D.J."/>
            <person name="Mayhew G.F."/>
            <person name="Evans P.S."/>
            <person name="Gregor J."/>
            <person name="Kirkpatrick H.A."/>
            <person name="Posfai G."/>
            <person name="Hackett J."/>
            <person name="Klink S."/>
            <person name="Boutin A."/>
            <person name="Shao Y."/>
            <person name="Miller L."/>
            <person name="Grotbeck E.J."/>
            <person name="Davis N.W."/>
            <person name="Lim A."/>
            <person name="Dimalanta E.T."/>
            <person name="Potamousis K."/>
            <person name="Apodaca J."/>
            <person name="Anantharaman T.S."/>
            <person name="Lin J."/>
            <person name="Yen G."/>
            <person name="Schwartz D.C."/>
            <person name="Welch R.A."/>
            <person name="Blattner F.R."/>
        </authorList>
    </citation>
    <scope>NUCLEOTIDE SEQUENCE [LARGE SCALE GENOMIC DNA]</scope>
    <source>
        <strain>O157:H7 / EDL933 / ATCC 700927 / EHEC</strain>
    </source>
</reference>
<reference key="2">
    <citation type="journal article" date="2001" name="DNA Res.">
        <title>Complete genome sequence of enterohemorrhagic Escherichia coli O157:H7 and genomic comparison with a laboratory strain K-12.</title>
        <authorList>
            <person name="Hayashi T."/>
            <person name="Makino K."/>
            <person name="Ohnishi M."/>
            <person name="Kurokawa K."/>
            <person name="Ishii K."/>
            <person name="Yokoyama K."/>
            <person name="Han C.-G."/>
            <person name="Ohtsubo E."/>
            <person name="Nakayama K."/>
            <person name="Murata T."/>
            <person name="Tanaka M."/>
            <person name="Tobe T."/>
            <person name="Iida T."/>
            <person name="Takami H."/>
            <person name="Honda T."/>
            <person name="Sasakawa C."/>
            <person name="Ogasawara N."/>
            <person name="Yasunaga T."/>
            <person name="Kuhara S."/>
            <person name="Shiba T."/>
            <person name="Hattori M."/>
            <person name="Shinagawa H."/>
        </authorList>
    </citation>
    <scope>NUCLEOTIDE SEQUENCE [LARGE SCALE GENOMIC DNA]</scope>
    <source>
        <strain>O157:H7 / Sakai / RIMD 0509952 / EHEC</strain>
    </source>
</reference>
<sequence>MSITLSDSAAARVNTFLANRGKGFGLRLGVRTSGCSGMAYVLEFVDEPTPEDIVFEDKGVKVVVDGKSLQFLDGTQLDFVKEGLNEGFKFTNPNVKDECGCGESFHV</sequence>
<gene>
    <name type="primary">iscA</name>
    <name type="ordered locus">Z3795</name>
    <name type="ordered locus">ECs3394</name>
</gene>
<keyword id="KW-0408">Iron</keyword>
<keyword id="KW-0479">Metal-binding</keyword>
<keyword id="KW-1185">Reference proteome</keyword>
<protein>
    <recommendedName>
        <fullName>Iron-binding protein IscA</fullName>
    </recommendedName>
    <alternativeName>
        <fullName>Iron-sulfur cluster assembly protein</fullName>
    </alternativeName>
</protein>
<dbReference type="EMBL" id="AE005174">
    <property type="protein sequence ID" value="AAG57642.1"/>
    <property type="molecule type" value="Genomic_DNA"/>
</dbReference>
<dbReference type="EMBL" id="BA000007">
    <property type="protein sequence ID" value="BAB36817.1"/>
    <property type="molecule type" value="Genomic_DNA"/>
</dbReference>
<dbReference type="PIR" id="B91053">
    <property type="entry name" value="B91053"/>
</dbReference>
<dbReference type="PIR" id="F85897">
    <property type="entry name" value="F85897"/>
</dbReference>
<dbReference type="RefSeq" id="NP_311421.1">
    <property type="nucleotide sequence ID" value="NC_002695.1"/>
</dbReference>
<dbReference type="RefSeq" id="WP_000028953.1">
    <property type="nucleotide sequence ID" value="NZ_VOAI01000001.1"/>
</dbReference>
<dbReference type="SMR" id="P0AAD0"/>
<dbReference type="STRING" id="155864.Z3795"/>
<dbReference type="GeneID" id="915168"/>
<dbReference type="GeneID" id="93774608"/>
<dbReference type="KEGG" id="ece:Z3795"/>
<dbReference type="KEGG" id="ecs:ECs_3394"/>
<dbReference type="PATRIC" id="fig|386585.9.peg.3546"/>
<dbReference type="eggNOG" id="COG0316">
    <property type="taxonomic scope" value="Bacteria"/>
</dbReference>
<dbReference type="HOGENOM" id="CLU_069054_5_1_6"/>
<dbReference type="OMA" id="GCAGQEY"/>
<dbReference type="Proteomes" id="UP000000558">
    <property type="component" value="Chromosome"/>
</dbReference>
<dbReference type="Proteomes" id="UP000002519">
    <property type="component" value="Chromosome"/>
</dbReference>
<dbReference type="GO" id="GO:0005829">
    <property type="term" value="C:cytosol"/>
    <property type="evidence" value="ECO:0007669"/>
    <property type="project" value="TreeGrafter"/>
</dbReference>
<dbReference type="GO" id="GO:0051537">
    <property type="term" value="F:2 iron, 2 sulfur cluster binding"/>
    <property type="evidence" value="ECO:0007669"/>
    <property type="project" value="UniProtKB-ARBA"/>
</dbReference>
<dbReference type="GO" id="GO:0005506">
    <property type="term" value="F:iron ion binding"/>
    <property type="evidence" value="ECO:0007669"/>
    <property type="project" value="UniProtKB-UniRule"/>
</dbReference>
<dbReference type="GO" id="GO:0016226">
    <property type="term" value="P:iron-sulfur cluster assembly"/>
    <property type="evidence" value="ECO:0007669"/>
    <property type="project" value="UniProtKB-UniRule"/>
</dbReference>
<dbReference type="FunFam" id="2.60.300.12:FF:000001">
    <property type="entry name" value="Iron-binding protein IscA"/>
    <property type="match status" value="1"/>
</dbReference>
<dbReference type="Gene3D" id="2.60.300.12">
    <property type="entry name" value="HesB-like domain"/>
    <property type="match status" value="1"/>
</dbReference>
<dbReference type="HAMAP" id="MF_01429">
    <property type="entry name" value="Fe_S_insert_IscA"/>
    <property type="match status" value="1"/>
</dbReference>
<dbReference type="InterPro" id="IPR050322">
    <property type="entry name" value="Fe-S_cluster_asmbl/transfer"/>
</dbReference>
<dbReference type="InterPro" id="IPR000361">
    <property type="entry name" value="FeS_biogenesis"/>
</dbReference>
<dbReference type="InterPro" id="IPR016092">
    <property type="entry name" value="FeS_cluster_insertion"/>
</dbReference>
<dbReference type="InterPro" id="IPR017870">
    <property type="entry name" value="FeS_cluster_insertion_CS"/>
</dbReference>
<dbReference type="InterPro" id="IPR035903">
    <property type="entry name" value="HesB-like_dom_sf"/>
</dbReference>
<dbReference type="InterPro" id="IPR011302">
    <property type="entry name" value="IscA_proteobacteria"/>
</dbReference>
<dbReference type="NCBIfam" id="TIGR00049">
    <property type="entry name" value="iron-sulfur cluster assembly accessory protein"/>
    <property type="match status" value="1"/>
</dbReference>
<dbReference type="NCBIfam" id="TIGR02011">
    <property type="entry name" value="IscA"/>
    <property type="match status" value="1"/>
</dbReference>
<dbReference type="NCBIfam" id="NF007049">
    <property type="entry name" value="PRK09502.1"/>
    <property type="match status" value="1"/>
</dbReference>
<dbReference type="PANTHER" id="PTHR10072:SF41">
    <property type="entry name" value="IRON-SULFUR CLUSTER ASSEMBLY 1 HOMOLOG, MITOCHONDRIAL"/>
    <property type="match status" value="1"/>
</dbReference>
<dbReference type="PANTHER" id="PTHR10072">
    <property type="entry name" value="IRON-SULFUR CLUSTER ASSEMBLY PROTEIN"/>
    <property type="match status" value="1"/>
</dbReference>
<dbReference type="Pfam" id="PF01521">
    <property type="entry name" value="Fe-S_biosyn"/>
    <property type="match status" value="1"/>
</dbReference>
<dbReference type="SUPFAM" id="SSF89360">
    <property type="entry name" value="HesB-like domain"/>
    <property type="match status" value="1"/>
</dbReference>
<dbReference type="PROSITE" id="PS01152">
    <property type="entry name" value="HESB"/>
    <property type="match status" value="1"/>
</dbReference>
<proteinExistence type="inferred from homology"/>
<organism>
    <name type="scientific">Escherichia coli O157:H7</name>
    <dbReference type="NCBI Taxonomy" id="83334"/>
    <lineage>
        <taxon>Bacteria</taxon>
        <taxon>Pseudomonadati</taxon>
        <taxon>Pseudomonadota</taxon>
        <taxon>Gammaproteobacteria</taxon>
        <taxon>Enterobacterales</taxon>
        <taxon>Enterobacteriaceae</taxon>
        <taxon>Escherichia</taxon>
    </lineage>
</organism>
<name>ISCA_ECO57</name>
<feature type="chain" id="PRO_0000076999" description="Iron-binding protein IscA">
    <location>
        <begin position="1"/>
        <end position="107"/>
    </location>
</feature>
<feature type="binding site" evidence="1">
    <location>
        <position position="35"/>
    </location>
    <ligand>
        <name>Fe cation</name>
        <dbReference type="ChEBI" id="CHEBI:24875"/>
    </ligand>
</feature>
<feature type="binding site" evidence="1">
    <location>
        <position position="99"/>
    </location>
    <ligand>
        <name>Fe cation</name>
        <dbReference type="ChEBI" id="CHEBI:24875"/>
    </ligand>
</feature>
<feature type="binding site" evidence="1">
    <location>
        <position position="101"/>
    </location>
    <ligand>
        <name>Fe cation</name>
        <dbReference type="ChEBI" id="CHEBI:24875"/>
    </ligand>
</feature>
<evidence type="ECO:0000250" key="1"/>
<evidence type="ECO:0000305" key="2"/>
<accession>P0AAD0</accession>
<accession>P36539</accession>
<accession>P77691</accession>